<comment type="similarity">
    <text evidence="1">Belongs to the UPF0473 family.</text>
</comment>
<gene>
    <name type="ordered locus">LBA0420</name>
</gene>
<sequence length="103" mass="11620">MAAQVNGDDNDRQITLIDDQGNEELYEVLFTFHSDDYDKSYVLLYPAAVGDDEDIEVQAFSYDADDTGDVTSSDLHEIESDDEWNMVQGVLNTFLDDDRLSGK</sequence>
<dbReference type="EMBL" id="CP000033">
    <property type="protein sequence ID" value="AAV42311.1"/>
    <property type="molecule type" value="Genomic_DNA"/>
</dbReference>
<dbReference type="RefSeq" id="WP_003549194.1">
    <property type="nucleotide sequence ID" value="NC_006814.3"/>
</dbReference>
<dbReference type="RefSeq" id="YP_193342.1">
    <property type="nucleotide sequence ID" value="NC_006814.3"/>
</dbReference>
<dbReference type="STRING" id="272621.LBA0420"/>
<dbReference type="KEGG" id="lac:LBA0420"/>
<dbReference type="PATRIC" id="fig|272621.13.peg.405"/>
<dbReference type="eggNOG" id="COG3906">
    <property type="taxonomic scope" value="Bacteria"/>
</dbReference>
<dbReference type="HOGENOM" id="CLU_146610_2_1_9"/>
<dbReference type="OrthoDB" id="2086132at2"/>
<dbReference type="BioCyc" id="LACI272621:G1G49-414-MONOMER"/>
<dbReference type="Proteomes" id="UP000006381">
    <property type="component" value="Chromosome"/>
</dbReference>
<dbReference type="HAMAP" id="MF_01448">
    <property type="entry name" value="UPF0473"/>
    <property type="match status" value="1"/>
</dbReference>
<dbReference type="InterPro" id="IPR009711">
    <property type="entry name" value="UPF0473"/>
</dbReference>
<dbReference type="NCBIfam" id="NF010217">
    <property type="entry name" value="PRK13678.1-4"/>
    <property type="match status" value="1"/>
</dbReference>
<dbReference type="PANTHER" id="PTHR40066">
    <property type="entry name" value="UPF0473 PROTEIN CBO2561/CLC_2432"/>
    <property type="match status" value="1"/>
</dbReference>
<dbReference type="PANTHER" id="PTHR40066:SF1">
    <property type="entry name" value="UPF0473 PROTEIN CBO2561_CLC_2432"/>
    <property type="match status" value="1"/>
</dbReference>
<dbReference type="Pfam" id="PF06949">
    <property type="entry name" value="DUF1292"/>
    <property type="match status" value="1"/>
</dbReference>
<proteinExistence type="inferred from homology"/>
<name>Y420_LACAC</name>
<reference key="1">
    <citation type="journal article" date="2005" name="Proc. Natl. Acad. Sci. U.S.A.">
        <title>Complete genome sequence of the probiotic lactic acid bacterium Lactobacillus acidophilus NCFM.</title>
        <authorList>
            <person name="Altermann E."/>
            <person name="Russell W.M."/>
            <person name="Azcarate-Peril M.A."/>
            <person name="Barrangou R."/>
            <person name="Buck B.L."/>
            <person name="McAuliffe O."/>
            <person name="Souther N."/>
            <person name="Dobson A."/>
            <person name="Duong T."/>
            <person name="Callanan M."/>
            <person name="Lick S."/>
            <person name="Hamrick A."/>
            <person name="Cano R."/>
            <person name="Klaenhammer T.R."/>
        </authorList>
    </citation>
    <scope>NUCLEOTIDE SEQUENCE [LARGE SCALE GENOMIC DNA]</scope>
    <source>
        <strain>ATCC 700396 / NCK56 / N2 / NCFM</strain>
    </source>
</reference>
<evidence type="ECO:0000255" key="1">
    <source>
        <dbReference type="HAMAP-Rule" id="MF_01448"/>
    </source>
</evidence>
<keyword id="KW-1185">Reference proteome</keyword>
<feature type="chain" id="PRO_0000304832" description="UPF0473 protein LBA0420">
    <location>
        <begin position="1"/>
        <end position="103"/>
    </location>
</feature>
<accession>Q5FLW3</accession>
<organism>
    <name type="scientific">Lactobacillus acidophilus (strain ATCC 700396 / NCK56 / N2 / NCFM)</name>
    <dbReference type="NCBI Taxonomy" id="272621"/>
    <lineage>
        <taxon>Bacteria</taxon>
        <taxon>Bacillati</taxon>
        <taxon>Bacillota</taxon>
        <taxon>Bacilli</taxon>
        <taxon>Lactobacillales</taxon>
        <taxon>Lactobacillaceae</taxon>
        <taxon>Lactobacillus</taxon>
    </lineage>
</organism>
<protein>
    <recommendedName>
        <fullName evidence="1">UPF0473 protein LBA0420</fullName>
    </recommendedName>
</protein>